<sequence length="342" mass="38687">MTIQEELEAVKQQFSCDVSLAHSSKDLFDVKVKYLGKKGIFRGFADQLRKYPIEQKATVGASINACKQYVEEVLLERGKAVLAKEEAEEFLKEKIDISLPGSEEAALGGKHVIKKVLDDVVDIFVRFGFCVREAPNIESEKNNFSLLNFEEDHPARQMQDTFYLDPTTVLRTHTSNVQSRELARNKPPVRIVAPGECFRNEDVSARSHVIFHQVEAFCVDKDISFSDLTSMLAGFYHIFFGRKVELRFRHSYFPFVEPGIEVDISCECHGAGCSLCKHAGWLEVAGAGMIHPNVLRKASIDPEEYSGYALGMGIERLAMLKYGISDIRLFSENDLRFLRQFS</sequence>
<feature type="chain" id="PRO_0000126689" description="Phenylalanine--tRNA ligase alpha subunit">
    <location>
        <begin position="1"/>
        <end position="342"/>
    </location>
</feature>
<feature type="binding site" evidence="1">
    <location>
        <position position="257"/>
    </location>
    <ligand>
        <name>Mg(2+)</name>
        <dbReference type="ChEBI" id="CHEBI:18420"/>
        <note>shared with beta subunit</note>
    </ligand>
</feature>
<keyword id="KW-0030">Aminoacyl-tRNA synthetase</keyword>
<keyword id="KW-0067">ATP-binding</keyword>
<keyword id="KW-0963">Cytoplasm</keyword>
<keyword id="KW-0436">Ligase</keyword>
<keyword id="KW-0460">Magnesium</keyword>
<keyword id="KW-0479">Metal-binding</keyword>
<keyword id="KW-0547">Nucleotide-binding</keyword>
<keyword id="KW-0648">Protein biosynthesis</keyword>
<keyword id="KW-1185">Reference proteome</keyword>
<gene>
    <name type="primary">pheS</name>
    <name type="ordered locus">CT_836</name>
</gene>
<reference key="1">
    <citation type="journal article" date="1998" name="Science">
        <title>Genome sequence of an obligate intracellular pathogen of humans: Chlamydia trachomatis.</title>
        <authorList>
            <person name="Stephens R.S."/>
            <person name="Kalman S."/>
            <person name="Lammel C.J."/>
            <person name="Fan J."/>
            <person name="Marathe R."/>
            <person name="Aravind L."/>
            <person name="Mitchell W.P."/>
            <person name="Olinger L."/>
            <person name="Tatusov R.L."/>
            <person name="Zhao Q."/>
            <person name="Koonin E.V."/>
            <person name="Davis R.W."/>
        </authorList>
    </citation>
    <scope>NUCLEOTIDE SEQUENCE [LARGE SCALE GENOMIC DNA]</scope>
    <source>
        <strain>ATCC VR-885 / DSM 19411 / UW-3/Cx</strain>
    </source>
</reference>
<protein>
    <recommendedName>
        <fullName>Phenylalanine--tRNA ligase alpha subunit</fullName>
        <ecNumber>6.1.1.20</ecNumber>
    </recommendedName>
    <alternativeName>
        <fullName>Phenylalanyl-tRNA synthetase alpha subunit</fullName>
        <shortName>PheRS</shortName>
    </alternativeName>
</protein>
<organism>
    <name type="scientific">Chlamydia trachomatis serovar D (strain ATCC VR-885 / DSM 19411 / UW-3/Cx)</name>
    <dbReference type="NCBI Taxonomy" id="272561"/>
    <lineage>
        <taxon>Bacteria</taxon>
        <taxon>Pseudomonadati</taxon>
        <taxon>Chlamydiota</taxon>
        <taxon>Chlamydiia</taxon>
        <taxon>Chlamydiales</taxon>
        <taxon>Chlamydiaceae</taxon>
        <taxon>Chlamydia/Chlamydophila group</taxon>
        <taxon>Chlamydia</taxon>
    </lineage>
</organism>
<evidence type="ECO:0000250" key="1"/>
<evidence type="ECO:0000305" key="2"/>
<accession>O84843</accession>
<proteinExistence type="inferred from homology"/>
<comment type="catalytic activity">
    <reaction>
        <text>tRNA(Phe) + L-phenylalanine + ATP = L-phenylalanyl-tRNA(Phe) + AMP + diphosphate + H(+)</text>
        <dbReference type="Rhea" id="RHEA:19413"/>
        <dbReference type="Rhea" id="RHEA-COMP:9668"/>
        <dbReference type="Rhea" id="RHEA-COMP:9699"/>
        <dbReference type="ChEBI" id="CHEBI:15378"/>
        <dbReference type="ChEBI" id="CHEBI:30616"/>
        <dbReference type="ChEBI" id="CHEBI:33019"/>
        <dbReference type="ChEBI" id="CHEBI:58095"/>
        <dbReference type="ChEBI" id="CHEBI:78442"/>
        <dbReference type="ChEBI" id="CHEBI:78531"/>
        <dbReference type="ChEBI" id="CHEBI:456215"/>
        <dbReference type="EC" id="6.1.1.20"/>
    </reaction>
</comment>
<comment type="cofactor">
    <cofactor evidence="1">
        <name>Mg(2+)</name>
        <dbReference type="ChEBI" id="CHEBI:18420"/>
    </cofactor>
    <text evidence="1">Binds 2 magnesium ions per tetramer.</text>
</comment>
<comment type="subunit">
    <text evidence="1">Tetramer of two alpha and two beta subunits.</text>
</comment>
<comment type="subcellular location">
    <subcellularLocation>
        <location evidence="1">Cytoplasm</location>
    </subcellularLocation>
</comment>
<comment type="similarity">
    <text evidence="2">Belongs to the class-II aminoacyl-tRNA synthetase family. Phe-tRNA synthetase alpha subunit type 1 subfamily.</text>
</comment>
<dbReference type="EC" id="6.1.1.20"/>
<dbReference type="EMBL" id="AE001273">
    <property type="protein sequence ID" value="AAC68433.1"/>
    <property type="molecule type" value="Genomic_DNA"/>
</dbReference>
<dbReference type="PIR" id="D71465">
    <property type="entry name" value="D71465"/>
</dbReference>
<dbReference type="RefSeq" id="NP_220357.1">
    <property type="nucleotide sequence ID" value="NC_000117.1"/>
</dbReference>
<dbReference type="RefSeq" id="WP_009872223.1">
    <property type="nucleotide sequence ID" value="NC_000117.1"/>
</dbReference>
<dbReference type="SMR" id="O84843"/>
<dbReference type="FunCoup" id="O84843">
    <property type="interactions" value="262"/>
</dbReference>
<dbReference type="STRING" id="272561.CT_836"/>
<dbReference type="EnsemblBacteria" id="AAC68433">
    <property type="protein sequence ID" value="AAC68433"/>
    <property type="gene ID" value="CT_836"/>
</dbReference>
<dbReference type="GeneID" id="884635"/>
<dbReference type="KEGG" id="ctr:CT_836"/>
<dbReference type="PATRIC" id="fig|272561.5.peg.923"/>
<dbReference type="HOGENOM" id="CLU_025086_0_1_0"/>
<dbReference type="InParanoid" id="O84843"/>
<dbReference type="OrthoDB" id="9800719at2"/>
<dbReference type="Proteomes" id="UP000000431">
    <property type="component" value="Chromosome"/>
</dbReference>
<dbReference type="GO" id="GO:0005737">
    <property type="term" value="C:cytoplasm"/>
    <property type="evidence" value="ECO:0000318"/>
    <property type="project" value="GO_Central"/>
</dbReference>
<dbReference type="GO" id="GO:0005524">
    <property type="term" value="F:ATP binding"/>
    <property type="evidence" value="ECO:0007669"/>
    <property type="project" value="UniProtKB-UniRule"/>
</dbReference>
<dbReference type="GO" id="GO:0000287">
    <property type="term" value="F:magnesium ion binding"/>
    <property type="evidence" value="ECO:0007669"/>
    <property type="project" value="UniProtKB-UniRule"/>
</dbReference>
<dbReference type="GO" id="GO:0004826">
    <property type="term" value="F:phenylalanine-tRNA ligase activity"/>
    <property type="evidence" value="ECO:0000318"/>
    <property type="project" value="GO_Central"/>
</dbReference>
<dbReference type="GO" id="GO:0000049">
    <property type="term" value="F:tRNA binding"/>
    <property type="evidence" value="ECO:0007669"/>
    <property type="project" value="InterPro"/>
</dbReference>
<dbReference type="GO" id="GO:0006432">
    <property type="term" value="P:phenylalanyl-tRNA aminoacylation"/>
    <property type="evidence" value="ECO:0000318"/>
    <property type="project" value="GO_Central"/>
</dbReference>
<dbReference type="CDD" id="cd00496">
    <property type="entry name" value="PheRS_alpha_core"/>
    <property type="match status" value="1"/>
</dbReference>
<dbReference type="FunFam" id="3.30.930.10:FF:000183">
    <property type="entry name" value="Phenylalanine--tRNA ligase alpha subunit"/>
    <property type="match status" value="1"/>
</dbReference>
<dbReference type="Gene3D" id="3.30.930.10">
    <property type="entry name" value="Bira Bifunctional Protein, Domain 2"/>
    <property type="match status" value="1"/>
</dbReference>
<dbReference type="HAMAP" id="MF_00281">
    <property type="entry name" value="Phe_tRNA_synth_alpha1"/>
    <property type="match status" value="1"/>
</dbReference>
<dbReference type="InterPro" id="IPR006195">
    <property type="entry name" value="aa-tRNA-synth_II"/>
</dbReference>
<dbReference type="InterPro" id="IPR045864">
    <property type="entry name" value="aa-tRNA-synth_II/BPL/LPL"/>
</dbReference>
<dbReference type="InterPro" id="IPR004529">
    <property type="entry name" value="Phe-tRNA-synth_IIc_asu"/>
</dbReference>
<dbReference type="InterPro" id="IPR004188">
    <property type="entry name" value="Phe-tRNA_ligase_II_N"/>
</dbReference>
<dbReference type="InterPro" id="IPR022911">
    <property type="entry name" value="Phe_tRNA_ligase_alpha1_bac"/>
</dbReference>
<dbReference type="InterPro" id="IPR002319">
    <property type="entry name" value="Phenylalanyl-tRNA_Synthase"/>
</dbReference>
<dbReference type="InterPro" id="IPR010978">
    <property type="entry name" value="tRNA-bd_arm"/>
</dbReference>
<dbReference type="NCBIfam" id="TIGR00468">
    <property type="entry name" value="pheS"/>
    <property type="match status" value="1"/>
</dbReference>
<dbReference type="PANTHER" id="PTHR11538:SF41">
    <property type="entry name" value="PHENYLALANINE--TRNA LIGASE, MITOCHONDRIAL"/>
    <property type="match status" value="1"/>
</dbReference>
<dbReference type="PANTHER" id="PTHR11538">
    <property type="entry name" value="PHENYLALANYL-TRNA SYNTHETASE"/>
    <property type="match status" value="1"/>
</dbReference>
<dbReference type="Pfam" id="PF02912">
    <property type="entry name" value="Phe_tRNA-synt_N"/>
    <property type="match status" value="1"/>
</dbReference>
<dbReference type="Pfam" id="PF01409">
    <property type="entry name" value="tRNA-synt_2d"/>
    <property type="match status" value="1"/>
</dbReference>
<dbReference type="SUPFAM" id="SSF55681">
    <property type="entry name" value="Class II aaRS and biotin synthetases"/>
    <property type="match status" value="1"/>
</dbReference>
<dbReference type="SUPFAM" id="SSF46589">
    <property type="entry name" value="tRNA-binding arm"/>
    <property type="match status" value="1"/>
</dbReference>
<dbReference type="PROSITE" id="PS50862">
    <property type="entry name" value="AA_TRNA_LIGASE_II"/>
    <property type="match status" value="1"/>
</dbReference>
<name>SYFA_CHLTR</name>